<proteinExistence type="inferred from homology"/>
<sequence>MSAVTPCADGLILRLYIQPKASRDSIVGLHGDEVKVAITAPPVDGQANSHLVKFLGKQFRVAKSQVVIEKGELGRHKQVKIIHPQQIPPEIAALTD</sequence>
<keyword id="KW-1185">Reference proteome</keyword>
<gene>
    <name type="ordered locus">CKO_04329</name>
</gene>
<protein>
    <recommendedName>
        <fullName evidence="1">UPF0235 protein CKO_04329</fullName>
    </recommendedName>
</protein>
<accession>A8APH3</accession>
<organism>
    <name type="scientific">Citrobacter koseri (strain ATCC BAA-895 / CDC 4225-83 / SGSC4696)</name>
    <dbReference type="NCBI Taxonomy" id="290338"/>
    <lineage>
        <taxon>Bacteria</taxon>
        <taxon>Pseudomonadati</taxon>
        <taxon>Pseudomonadota</taxon>
        <taxon>Gammaproteobacteria</taxon>
        <taxon>Enterobacterales</taxon>
        <taxon>Enterobacteriaceae</taxon>
        <taxon>Citrobacter</taxon>
    </lineage>
</organism>
<feature type="chain" id="PRO_1000056763" description="UPF0235 protein CKO_04329">
    <location>
        <begin position="1"/>
        <end position="96"/>
    </location>
</feature>
<dbReference type="EMBL" id="CP000822">
    <property type="protein sequence ID" value="ABV15386.1"/>
    <property type="molecule type" value="Genomic_DNA"/>
</dbReference>
<dbReference type="SMR" id="A8APH3"/>
<dbReference type="STRING" id="290338.CKO_04329"/>
<dbReference type="GeneID" id="45137919"/>
<dbReference type="KEGG" id="cko:CKO_04329"/>
<dbReference type="HOGENOM" id="CLU_130694_5_0_6"/>
<dbReference type="OrthoDB" id="9800587at2"/>
<dbReference type="Proteomes" id="UP000008148">
    <property type="component" value="Chromosome"/>
</dbReference>
<dbReference type="GO" id="GO:0005737">
    <property type="term" value="C:cytoplasm"/>
    <property type="evidence" value="ECO:0007669"/>
    <property type="project" value="TreeGrafter"/>
</dbReference>
<dbReference type="Gene3D" id="3.30.1200.10">
    <property type="entry name" value="YggU-like"/>
    <property type="match status" value="1"/>
</dbReference>
<dbReference type="HAMAP" id="MF_00634">
    <property type="entry name" value="UPF0235"/>
    <property type="match status" value="1"/>
</dbReference>
<dbReference type="InterPro" id="IPR003746">
    <property type="entry name" value="DUF167"/>
</dbReference>
<dbReference type="InterPro" id="IPR036591">
    <property type="entry name" value="YggU-like_sf"/>
</dbReference>
<dbReference type="NCBIfam" id="TIGR00251">
    <property type="entry name" value="DUF167 family protein"/>
    <property type="match status" value="1"/>
</dbReference>
<dbReference type="NCBIfam" id="NF003466">
    <property type="entry name" value="PRK05090.1"/>
    <property type="match status" value="1"/>
</dbReference>
<dbReference type="PANTHER" id="PTHR13420">
    <property type="entry name" value="UPF0235 PROTEIN C15ORF40"/>
    <property type="match status" value="1"/>
</dbReference>
<dbReference type="PANTHER" id="PTHR13420:SF7">
    <property type="entry name" value="UPF0235 PROTEIN C15ORF40"/>
    <property type="match status" value="1"/>
</dbReference>
<dbReference type="Pfam" id="PF02594">
    <property type="entry name" value="DUF167"/>
    <property type="match status" value="1"/>
</dbReference>
<dbReference type="SMART" id="SM01152">
    <property type="entry name" value="DUF167"/>
    <property type="match status" value="1"/>
</dbReference>
<dbReference type="SUPFAM" id="SSF69786">
    <property type="entry name" value="YggU-like"/>
    <property type="match status" value="1"/>
</dbReference>
<comment type="similarity">
    <text evidence="1">Belongs to the UPF0235 family.</text>
</comment>
<reference key="1">
    <citation type="submission" date="2007-08" db="EMBL/GenBank/DDBJ databases">
        <authorList>
            <consortium name="The Citrobacter koseri Genome Sequencing Project"/>
            <person name="McClelland M."/>
            <person name="Sanderson E.K."/>
            <person name="Porwollik S."/>
            <person name="Spieth J."/>
            <person name="Clifton W.S."/>
            <person name="Latreille P."/>
            <person name="Courtney L."/>
            <person name="Wang C."/>
            <person name="Pepin K."/>
            <person name="Bhonagiri V."/>
            <person name="Nash W."/>
            <person name="Johnson M."/>
            <person name="Thiruvilangam P."/>
            <person name="Wilson R."/>
        </authorList>
    </citation>
    <scope>NUCLEOTIDE SEQUENCE [LARGE SCALE GENOMIC DNA]</scope>
    <source>
        <strain>ATCC BAA-895 / CDC 4225-83 / SGSC4696</strain>
    </source>
</reference>
<name>Y4329_CITK8</name>
<evidence type="ECO:0000255" key="1">
    <source>
        <dbReference type="HAMAP-Rule" id="MF_00634"/>
    </source>
</evidence>